<accession>Q58995</accession>
<organism>
    <name type="scientific">Methanocaldococcus jannaschii (strain ATCC 43067 / DSM 2661 / JAL-1 / JCM 10045 / NBRC 100440)</name>
    <name type="common">Methanococcus jannaschii</name>
    <dbReference type="NCBI Taxonomy" id="243232"/>
    <lineage>
        <taxon>Archaea</taxon>
        <taxon>Methanobacteriati</taxon>
        <taxon>Methanobacteriota</taxon>
        <taxon>Methanomada group</taxon>
        <taxon>Methanococci</taxon>
        <taxon>Methanococcales</taxon>
        <taxon>Methanocaldococcaceae</taxon>
        <taxon>Methanocaldococcus</taxon>
    </lineage>
</organism>
<protein>
    <recommendedName>
        <fullName evidence="1">CDP-archaeol synthase</fullName>
        <ecNumber evidence="1">2.7.7.67</ecNumber>
    </recommendedName>
    <alternativeName>
        <fullName evidence="1">CDP-2,3-bis-(O-geranylgeranyl)-sn-glycerol synthase</fullName>
    </alternativeName>
</protein>
<dbReference type="EC" id="2.7.7.67" evidence="1"/>
<dbReference type="EMBL" id="L77117">
    <property type="protein sequence ID" value="AAB99620.1"/>
    <property type="molecule type" value="Genomic_DNA"/>
</dbReference>
<dbReference type="PIR" id="G64499">
    <property type="entry name" value="G64499"/>
</dbReference>
<dbReference type="RefSeq" id="WP_010871125.1">
    <property type="nucleotide sequence ID" value="NC_000909.1"/>
</dbReference>
<dbReference type="SMR" id="Q58995"/>
<dbReference type="FunCoup" id="Q58995">
    <property type="interactions" value="1"/>
</dbReference>
<dbReference type="STRING" id="243232.MJ_1600"/>
<dbReference type="PaxDb" id="243232-MJ_1600"/>
<dbReference type="EnsemblBacteria" id="AAB99620">
    <property type="protein sequence ID" value="AAB99620"/>
    <property type="gene ID" value="MJ_1600"/>
</dbReference>
<dbReference type="GeneID" id="1452509"/>
<dbReference type="KEGG" id="mja:MJ_1600"/>
<dbReference type="eggNOG" id="arCOG04106">
    <property type="taxonomic scope" value="Archaea"/>
</dbReference>
<dbReference type="HOGENOM" id="CLU_105710_0_0_2"/>
<dbReference type="InParanoid" id="Q58995"/>
<dbReference type="OrthoDB" id="45383at2157"/>
<dbReference type="PhylomeDB" id="Q58995"/>
<dbReference type="UniPathway" id="UPA00940"/>
<dbReference type="Proteomes" id="UP000000805">
    <property type="component" value="Chromosome"/>
</dbReference>
<dbReference type="GO" id="GO:0005886">
    <property type="term" value="C:plasma membrane"/>
    <property type="evidence" value="ECO:0007669"/>
    <property type="project" value="UniProtKB-SubCell"/>
</dbReference>
<dbReference type="GO" id="GO:0043338">
    <property type="term" value="F:CDP-2,3-bis-(O-geranylgeranyl)-sn-glycerol synthase activity"/>
    <property type="evidence" value="ECO:0007669"/>
    <property type="project" value="UniProtKB-EC"/>
</dbReference>
<dbReference type="GO" id="GO:0046474">
    <property type="term" value="P:glycerophospholipid biosynthetic process"/>
    <property type="evidence" value="ECO:0007669"/>
    <property type="project" value="UniProtKB-UniRule"/>
</dbReference>
<dbReference type="HAMAP" id="MF_01117">
    <property type="entry name" value="CDP_archaeol_synth"/>
    <property type="match status" value="1"/>
</dbReference>
<dbReference type="InterPro" id="IPR032690">
    <property type="entry name" value="CarS"/>
</dbReference>
<dbReference type="InterPro" id="IPR002726">
    <property type="entry name" value="CarS_archaea"/>
</dbReference>
<dbReference type="NCBIfam" id="NF003114">
    <property type="entry name" value="PRK04032.1"/>
    <property type="match status" value="1"/>
</dbReference>
<dbReference type="PANTHER" id="PTHR39650">
    <property type="entry name" value="CDP-ARCHAEOL SYNTHASE"/>
    <property type="match status" value="1"/>
</dbReference>
<dbReference type="PANTHER" id="PTHR39650:SF1">
    <property type="entry name" value="CDP-ARCHAEOL SYNTHASE"/>
    <property type="match status" value="1"/>
</dbReference>
<dbReference type="Pfam" id="PF01864">
    <property type="entry name" value="CarS-like"/>
    <property type="match status" value="1"/>
</dbReference>
<proteinExistence type="inferred from homology"/>
<evidence type="ECO:0000255" key="1">
    <source>
        <dbReference type="HAMAP-Rule" id="MF_01117"/>
    </source>
</evidence>
<gene>
    <name evidence="1" type="primary">carS</name>
    <name type="ordered locus">MJ1600</name>
</gene>
<sequence length="177" mass="19460">MFYRLLFASLWYILPAYVANASACIFGGGTPVDLGKNFIDGRRLIGNGVTYRGCIFGILCGTLVGLIQGILVDFNIFNSLDFYGTVLDHVILAFFLSVGAIVGDAVGSFIKRRLNIERGKPAPLLDQLDFVIGALAFGYIVAPIPYEMIIIICLFTVFVHLLGNIIAYKLGIKDVWW</sequence>
<feature type="chain" id="PRO_0000094170" description="CDP-archaeol synthase">
    <location>
        <begin position="1"/>
        <end position="177"/>
    </location>
</feature>
<feature type="transmembrane region" description="Helical" evidence="1">
    <location>
        <begin position="6"/>
        <end position="26"/>
    </location>
</feature>
<feature type="transmembrane region" description="Helical" evidence="1">
    <location>
        <begin position="54"/>
        <end position="74"/>
    </location>
</feature>
<feature type="transmembrane region" description="Helical" evidence="1">
    <location>
        <begin position="90"/>
        <end position="110"/>
    </location>
</feature>
<feature type="transmembrane region" description="Helical" evidence="1">
    <location>
        <begin position="124"/>
        <end position="144"/>
    </location>
</feature>
<feature type="transmembrane region" description="Helical" evidence="1">
    <location>
        <begin position="148"/>
        <end position="168"/>
    </location>
</feature>
<comment type="function">
    <text evidence="1">Catalyzes the formation of CDP-2,3-bis-(O-geranylgeranyl)-sn-glycerol (CDP-archaeol) from 2,3-bis-(O-geranylgeranyl)-sn-glycerol 1-phosphate (DGGGP) and CTP. This reaction is the third ether-bond-formation step in the biosynthesis of archaeal membrane lipids.</text>
</comment>
<comment type="catalytic activity">
    <reaction evidence="1">
        <text>2,3-bis-O-(geranylgeranyl)-sn-glycerol 1-phosphate + CTP + H(+) = CDP-2,3-bis-O-(geranylgeranyl)-sn-glycerol + diphosphate</text>
        <dbReference type="Rhea" id="RHEA:25690"/>
        <dbReference type="ChEBI" id="CHEBI:15378"/>
        <dbReference type="ChEBI" id="CHEBI:33019"/>
        <dbReference type="ChEBI" id="CHEBI:37563"/>
        <dbReference type="ChEBI" id="CHEBI:58837"/>
        <dbReference type="ChEBI" id="CHEBI:58838"/>
        <dbReference type="EC" id="2.7.7.67"/>
    </reaction>
</comment>
<comment type="cofactor">
    <cofactor evidence="1">
        <name>Mg(2+)</name>
        <dbReference type="ChEBI" id="CHEBI:18420"/>
    </cofactor>
</comment>
<comment type="pathway">
    <text evidence="1">Membrane lipid metabolism; glycerophospholipid metabolism.</text>
</comment>
<comment type="subcellular location">
    <subcellularLocation>
        <location evidence="1">Cell membrane</location>
        <topology evidence="1">Multi-pass membrane protein</topology>
    </subcellularLocation>
</comment>
<comment type="similarity">
    <text evidence="1">Belongs to the CDP-archaeol synthase family.</text>
</comment>
<reference key="1">
    <citation type="journal article" date="1996" name="Science">
        <title>Complete genome sequence of the methanogenic archaeon, Methanococcus jannaschii.</title>
        <authorList>
            <person name="Bult C.J."/>
            <person name="White O."/>
            <person name="Olsen G.J."/>
            <person name="Zhou L."/>
            <person name="Fleischmann R.D."/>
            <person name="Sutton G.G."/>
            <person name="Blake J.A."/>
            <person name="FitzGerald L.M."/>
            <person name="Clayton R.A."/>
            <person name="Gocayne J.D."/>
            <person name="Kerlavage A.R."/>
            <person name="Dougherty B.A."/>
            <person name="Tomb J.-F."/>
            <person name="Adams M.D."/>
            <person name="Reich C.I."/>
            <person name="Overbeek R."/>
            <person name="Kirkness E.F."/>
            <person name="Weinstock K.G."/>
            <person name="Merrick J.M."/>
            <person name="Glodek A."/>
            <person name="Scott J.L."/>
            <person name="Geoghagen N.S.M."/>
            <person name="Weidman J.F."/>
            <person name="Fuhrmann J.L."/>
            <person name="Nguyen D."/>
            <person name="Utterback T.R."/>
            <person name="Kelley J.M."/>
            <person name="Peterson J.D."/>
            <person name="Sadow P.W."/>
            <person name="Hanna M.C."/>
            <person name="Cotton M.D."/>
            <person name="Roberts K.M."/>
            <person name="Hurst M.A."/>
            <person name="Kaine B.P."/>
            <person name="Borodovsky M."/>
            <person name="Klenk H.-P."/>
            <person name="Fraser C.M."/>
            <person name="Smith H.O."/>
            <person name="Woese C.R."/>
            <person name="Venter J.C."/>
        </authorList>
    </citation>
    <scope>NUCLEOTIDE SEQUENCE [LARGE SCALE GENOMIC DNA]</scope>
    <source>
        <strain>ATCC 43067 / DSM 2661 / JAL-1 / JCM 10045 / NBRC 100440</strain>
    </source>
</reference>
<name>CDPAS_METJA</name>
<keyword id="KW-1003">Cell membrane</keyword>
<keyword id="KW-0444">Lipid biosynthesis</keyword>
<keyword id="KW-0443">Lipid metabolism</keyword>
<keyword id="KW-0460">Magnesium</keyword>
<keyword id="KW-0472">Membrane</keyword>
<keyword id="KW-0594">Phospholipid biosynthesis</keyword>
<keyword id="KW-1208">Phospholipid metabolism</keyword>
<keyword id="KW-1185">Reference proteome</keyword>
<keyword id="KW-0808">Transferase</keyword>
<keyword id="KW-0812">Transmembrane</keyword>
<keyword id="KW-1133">Transmembrane helix</keyword>